<organism>
    <name type="scientific">Methylobacterium radiotolerans (strain ATCC 27329 / DSM 1819 / JCM 2831 / NBRC 15690 / NCIMB 10815 / 0-1)</name>
    <dbReference type="NCBI Taxonomy" id="426355"/>
    <lineage>
        <taxon>Bacteria</taxon>
        <taxon>Pseudomonadati</taxon>
        <taxon>Pseudomonadota</taxon>
        <taxon>Alphaproteobacteria</taxon>
        <taxon>Hyphomicrobiales</taxon>
        <taxon>Methylobacteriaceae</taxon>
        <taxon>Methylobacterium</taxon>
    </lineage>
</organism>
<feature type="chain" id="PRO_1000124310" description="Ketol-acid reductoisomerase (NADP(+))">
    <location>
        <begin position="1"/>
        <end position="339"/>
    </location>
</feature>
<feature type="domain" description="KARI N-terminal Rossmann" evidence="2">
    <location>
        <begin position="1"/>
        <end position="182"/>
    </location>
</feature>
<feature type="domain" description="KARI C-terminal knotted" evidence="3">
    <location>
        <begin position="183"/>
        <end position="328"/>
    </location>
</feature>
<feature type="active site" evidence="1">
    <location>
        <position position="108"/>
    </location>
</feature>
<feature type="binding site" evidence="1">
    <location>
        <begin position="24"/>
        <end position="27"/>
    </location>
    <ligand>
        <name>NADP(+)</name>
        <dbReference type="ChEBI" id="CHEBI:58349"/>
    </ligand>
</feature>
<feature type="binding site" evidence="1">
    <location>
        <position position="48"/>
    </location>
    <ligand>
        <name>NADP(+)</name>
        <dbReference type="ChEBI" id="CHEBI:58349"/>
    </ligand>
</feature>
<feature type="binding site" evidence="1">
    <location>
        <position position="51"/>
    </location>
    <ligand>
        <name>NADP(+)</name>
        <dbReference type="ChEBI" id="CHEBI:58349"/>
    </ligand>
</feature>
<feature type="binding site" evidence="1">
    <location>
        <position position="53"/>
    </location>
    <ligand>
        <name>NADP(+)</name>
        <dbReference type="ChEBI" id="CHEBI:58349"/>
    </ligand>
</feature>
<feature type="binding site" evidence="1">
    <location>
        <begin position="83"/>
        <end position="86"/>
    </location>
    <ligand>
        <name>NADP(+)</name>
        <dbReference type="ChEBI" id="CHEBI:58349"/>
    </ligand>
</feature>
<feature type="binding site" evidence="1">
    <location>
        <position position="134"/>
    </location>
    <ligand>
        <name>NADP(+)</name>
        <dbReference type="ChEBI" id="CHEBI:58349"/>
    </ligand>
</feature>
<feature type="binding site" evidence="1">
    <location>
        <position position="191"/>
    </location>
    <ligand>
        <name>Mg(2+)</name>
        <dbReference type="ChEBI" id="CHEBI:18420"/>
        <label>1</label>
    </ligand>
</feature>
<feature type="binding site" evidence="1">
    <location>
        <position position="191"/>
    </location>
    <ligand>
        <name>Mg(2+)</name>
        <dbReference type="ChEBI" id="CHEBI:18420"/>
        <label>2</label>
    </ligand>
</feature>
<feature type="binding site" evidence="1">
    <location>
        <position position="195"/>
    </location>
    <ligand>
        <name>Mg(2+)</name>
        <dbReference type="ChEBI" id="CHEBI:18420"/>
        <label>1</label>
    </ligand>
</feature>
<feature type="binding site" evidence="1">
    <location>
        <position position="227"/>
    </location>
    <ligand>
        <name>Mg(2+)</name>
        <dbReference type="ChEBI" id="CHEBI:18420"/>
        <label>2</label>
    </ligand>
</feature>
<feature type="binding site" evidence="1">
    <location>
        <position position="231"/>
    </location>
    <ligand>
        <name>Mg(2+)</name>
        <dbReference type="ChEBI" id="CHEBI:18420"/>
        <label>2</label>
    </ligand>
</feature>
<feature type="binding site" evidence="1">
    <location>
        <position position="252"/>
    </location>
    <ligand>
        <name>substrate</name>
    </ligand>
</feature>
<reference key="1">
    <citation type="submission" date="2008-03" db="EMBL/GenBank/DDBJ databases">
        <title>Complete sequence of chromosome of Methylobacterium radiotolerans JCM 2831.</title>
        <authorList>
            <consortium name="US DOE Joint Genome Institute"/>
            <person name="Copeland A."/>
            <person name="Lucas S."/>
            <person name="Lapidus A."/>
            <person name="Glavina del Rio T."/>
            <person name="Dalin E."/>
            <person name="Tice H."/>
            <person name="Bruce D."/>
            <person name="Goodwin L."/>
            <person name="Pitluck S."/>
            <person name="Kiss H."/>
            <person name="Brettin T."/>
            <person name="Detter J.C."/>
            <person name="Han C."/>
            <person name="Kuske C.R."/>
            <person name="Schmutz J."/>
            <person name="Larimer F."/>
            <person name="Land M."/>
            <person name="Hauser L."/>
            <person name="Kyrpides N."/>
            <person name="Mikhailova N."/>
            <person name="Marx C.J."/>
            <person name="Richardson P."/>
        </authorList>
    </citation>
    <scope>NUCLEOTIDE SEQUENCE [LARGE SCALE GENOMIC DNA]</scope>
    <source>
        <strain>ATCC 27329 / DSM 1819 / JCM 2831 / NBRC 15690 / NCIMB 10815 / 0-1</strain>
    </source>
</reference>
<gene>
    <name evidence="1" type="primary">ilvC</name>
    <name type="ordered locus">Mrad2831_5327</name>
</gene>
<keyword id="KW-0028">Amino-acid biosynthesis</keyword>
<keyword id="KW-0100">Branched-chain amino acid biosynthesis</keyword>
<keyword id="KW-0460">Magnesium</keyword>
<keyword id="KW-0479">Metal-binding</keyword>
<keyword id="KW-0521">NADP</keyword>
<keyword id="KW-0560">Oxidoreductase</keyword>
<comment type="function">
    <text evidence="1">Involved in the biosynthesis of branched-chain amino acids (BCAA). Catalyzes an alkyl-migration followed by a ketol-acid reduction of (S)-2-acetolactate (S2AL) to yield (R)-2,3-dihydroxy-isovalerate. In the isomerase reaction, S2AL is rearranged via a Mg-dependent methyl migration to produce 3-hydroxy-3-methyl-2-ketobutyrate (HMKB). In the reductase reaction, this 2-ketoacid undergoes a metal-dependent reduction by NADPH to yield (R)-2,3-dihydroxy-isovalerate.</text>
</comment>
<comment type="catalytic activity">
    <reaction evidence="1">
        <text>(2R)-2,3-dihydroxy-3-methylbutanoate + NADP(+) = (2S)-2-acetolactate + NADPH + H(+)</text>
        <dbReference type="Rhea" id="RHEA:22068"/>
        <dbReference type="ChEBI" id="CHEBI:15378"/>
        <dbReference type="ChEBI" id="CHEBI:49072"/>
        <dbReference type="ChEBI" id="CHEBI:57783"/>
        <dbReference type="ChEBI" id="CHEBI:58349"/>
        <dbReference type="ChEBI" id="CHEBI:58476"/>
        <dbReference type="EC" id="1.1.1.86"/>
    </reaction>
</comment>
<comment type="catalytic activity">
    <reaction evidence="1">
        <text>(2R,3R)-2,3-dihydroxy-3-methylpentanoate + NADP(+) = (S)-2-ethyl-2-hydroxy-3-oxobutanoate + NADPH + H(+)</text>
        <dbReference type="Rhea" id="RHEA:13493"/>
        <dbReference type="ChEBI" id="CHEBI:15378"/>
        <dbReference type="ChEBI" id="CHEBI:49256"/>
        <dbReference type="ChEBI" id="CHEBI:49258"/>
        <dbReference type="ChEBI" id="CHEBI:57783"/>
        <dbReference type="ChEBI" id="CHEBI:58349"/>
        <dbReference type="EC" id="1.1.1.86"/>
    </reaction>
</comment>
<comment type="cofactor">
    <cofactor evidence="1">
        <name>Mg(2+)</name>
        <dbReference type="ChEBI" id="CHEBI:18420"/>
    </cofactor>
    <text evidence="1">Binds 2 magnesium ions per subunit.</text>
</comment>
<comment type="pathway">
    <text evidence="1">Amino-acid biosynthesis; L-isoleucine biosynthesis; L-isoleucine from 2-oxobutanoate: step 2/4.</text>
</comment>
<comment type="pathway">
    <text evidence="1">Amino-acid biosynthesis; L-valine biosynthesis; L-valine from pyruvate: step 2/4.</text>
</comment>
<comment type="similarity">
    <text evidence="1">Belongs to the ketol-acid reductoisomerase family.</text>
</comment>
<evidence type="ECO:0000255" key="1">
    <source>
        <dbReference type="HAMAP-Rule" id="MF_00435"/>
    </source>
</evidence>
<evidence type="ECO:0000255" key="2">
    <source>
        <dbReference type="PROSITE-ProRule" id="PRU01197"/>
    </source>
</evidence>
<evidence type="ECO:0000255" key="3">
    <source>
        <dbReference type="PROSITE-ProRule" id="PRU01198"/>
    </source>
</evidence>
<accession>B1LXF3</accession>
<proteinExistence type="inferred from homology"/>
<sequence length="339" mass="36931">MRVYYDRDADLNLIKGKKVAIVGYGSQGHAHALNLRDSGVKDIVIALREGSATAKKAEHEGFKVLSVAEAAKWADVVMMLTPDELQGDIYRESLEGNMKQGAALLFAHGLNVHFNLIEPRKDLDVLMVAPKGPGHTVRSEYLRGGGVPTLIAIAQDASGNAHDLGLSYASANGGGRAGIIETTFKEECETDLFGEQAVLCGGLVELIKAGFETLVEAGYAPEMAYFECLHEVKLIVDLIYEGGIANMNYSISNTAEYGEYVTGPRIVTPETKAEMKRVLNDIQSGTFTRNWMLENKVNQTSFKATRAKLAAHPIEEVGAKLRGMMPWISEKALVDKTRN</sequence>
<protein>
    <recommendedName>
        <fullName evidence="1">Ketol-acid reductoisomerase (NADP(+))</fullName>
        <shortName evidence="1">KARI</shortName>
        <ecNumber evidence="1">1.1.1.86</ecNumber>
    </recommendedName>
    <alternativeName>
        <fullName evidence="1">Acetohydroxy-acid isomeroreductase</fullName>
        <shortName evidence="1">AHIR</shortName>
    </alternativeName>
    <alternativeName>
        <fullName evidence="1">Alpha-keto-beta-hydroxylacyl reductoisomerase</fullName>
    </alternativeName>
    <alternativeName>
        <fullName evidence="1">Ketol-acid reductoisomerase type 1</fullName>
    </alternativeName>
    <alternativeName>
        <fullName evidence="1">Ketol-acid reductoisomerase type I</fullName>
    </alternativeName>
</protein>
<dbReference type="EC" id="1.1.1.86" evidence="1"/>
<dbReference type="EMBL" id="CP001001">
    <property type="protein sequence ID" value="ACB27274.1"/>
    <property type="molecule type" value="Genomic_DNA"/>
</dbReference>
<dbReference type="RefSeq" id="WP_012322218.1">
    <property type="nucleotide sequence ID" value="NC_010505.1"/>
</dbReference>
<dbReference type="SMR" id="B1LXF3"/>
<dbReference type="STRING" id="426355.Mrad2831_5327"/>
<dbReference type="GeneID" id="96602095"/>
<dbReference type="KEGG" id="mrd:Mrad2831_5327"/>
<dbReference type="eggNOG" id="COG0059">
    <property type="taxonomic scope" value="Bacteria"/>
</dbReference>
<dbReference type="HOGENOM" id="CLU_033821_0_1_5"/>
<dbReference type="OrthoDB" id="9804088at2"/>
<dbReference type="UniPathway" id="UPA00047">
    <property type="reaction ID" value="UER00056"/>
</dbReference>
<dbReference type="UniPathway" id="UPA00049">
    <property type="reaction ID" value="UER00060"/>
</dbReference>
<dbReference type="Proteomes" id="UP000006589">
    <property type="component" value="Chromosome"/>
</dbReference>
<dbReference type="GO" id="GO:0005829">
    <property type="term" value="C:cytosol"/>
    <property type="evidence" value="ECO:0007669"/>
    <property type="project" value="TreeGrafter"/>
</dbReference>
<dbReference type="GO" id="GO:0004455">
    <property type="term" value="F:ketol-acid reductoisomerase activity"/>
    <property type="evidence" value="ECO:0007669"/>
    <property type="project" value="UniProtKB-UniRule"/>
</dbReference>
<dbReference type="GO" id="GO:0000287">
    <property type="term" value="F:magnesium ion binding"/>
    <property type="evidence" value="ECO:0007669"/>
    <property type="project" value="UniProtKB-UniRule"/>
</dbReference>
<dbReference type="GO" id="GO:0050661">
    <property type="term" value="F:NADP binding"/>
    <property type="evidence" value="ECO:0007669"/>
    <property type="project" value="InterPro"/>
</dbReference>
<dbReference type="GO" id="GO:0009097">
    <property type="term" value="P:isoleucine biosynthetic process"/>
    <property type="evidence" value="ECO:0007669"/>
    <property type="project" value="UniProtKB-UniRule"/>
</dbReference>
<dbReference type="GO" id="GO:0009099">
    <property type="term" value="P:L-valine biosynthetic process"/>
    <property type="evidence" value="ECO:0007669"/>
    <property type="project" value="UniProtKB-UniRule"/>
</dbReference>
<dbReference type="FunFam" id="3.40.50.720:FF:000023">
    <property type="entry name" value="Ketol-acid reductoisomerase (NADP(+))"/>
    <property type="match status" value="1"/>
</dbReference>
<dbReference type="Gene3D" id="6.10.240.10">
    <property type="match status" value="1"/>
</dbReference>
<dbReference type="Gene3D" id="3.40.50.720">
    <property type="entry name" value="NAD(P)-binding Rossmann-like Domain"/>
    <property type="match status" value="1"/>
</dbReference>
<dbReference type="HAMAP" id="MF_00435">
    <property type="entry name" value="IlvC"/>
    <property type="match status" value="1"/>
</dbReference>
<dbReference type="InterPro" id="IPR008927">
    <property type="entry name" value="6-PGluconate_DH-like_C_sf"/>
</dbReference>
<dbReference type="InterPro" id="IPR013023">
    <property type="entry name" value="KARI"/>
</dbReference>
<dbReference type="InterPro" id="IPR000506">
    <property type="entry name" value="KARI_C"/>
</dbReference>
<dbReference type="InterPro" id="IPR013116">
    <property type="entry name" value="KARI_N"/>
</dbReference>
<dbReference type="InterPro" id="IPR014359">
    <property type="entry name" value="KARI_prok"/>
</dbReference>
<dbReference type="InterPro" id="IPR036291">
    <property type="entry name" value="NAD(P)-bd_dom_sf"/>
</dbReference>
<dbReference type="NCBIfam" id="TIGR00465">
    <property type="entry name" value="ilvC"/>
    <property type="match status" value="1"/>
</dbReference>
<dbReference type="NCBIfam" id="NF004017">
    <property type="entry name" value="PRK05479.1"/>
    <property type="match status" value="1"/>
</dbReference>
<dbReference type="NCBIfam" id="NF009940">
    <property type="entry name" value="PRK13403.1"/>
    <property type="match status" value="1"/>
</dbReference>
<dbReference type="PANTHER" id="PTHR21371">
    <property type="entry name" value="KETOL-ACID REDUCTOISOMERASE, MITOCHONDRIAL"/>
    <property type="match status" value="1"/>
</dbReference>
<dbReference type="PANTHER" id="PTHR21371:SF1">
    <property type="entry name" value="KETOL-ACID REDUCTOISOMERASE, MITOCHONDRIAL"/>
    <property type="match status" value="1"/>
</dbReference>
<dbReference type="Pfam" id="PF01450">
    <property type="entry name" value="KARI_C"/>
    <property type="match status" value="1"/>
</dbReference>
<dbReference type="Pfam" id="PF07991">
    <property type="entry name" value="KARI_N"/>
    <property type="match status" value="1"/>
</dbReference>
<dbReference type="PIRSF" id="PIRSF000116">
    <property type="entry name" value="IlvC_gammaproteo"/>
    <property type="match status" value="1"/>
</dbReference>
<dbReference type="SUPFAM" id="SSF48179">
    <property type="entry name" value="6-phosphogluconate dehydrogenase C-terminal domain-like"/>
    <property type="match status" value="1"/>
</dbReference>
<dbReference type="SUPFAM" id="SSF51735">
    <property type="entry name" value="NAD(P)-binding Rossmann-fold domains"/>
    <property type="match status" value="1"/>
</dbReference>
<dbReference type="PROSITE" id="PS51851">
    <property type="entry name" value="KARI_C"/>
    <property type="match status" value="1"/>
</dbReference>
<dbReference type="PROSITE" id="PS51850">
    <property type="entry name" value="KARI_N"/>
    <property type="match status" value="1"/>
</dbReference>
<name>ILVC_METRJ</name>